<name>IXO39_IXOSC</name>
<dbReference type="EMBL" id="DQ066012">
    <property type="protein sequence ID" value="AAY66649.1"/>
    <property type="molecule type" value="mRNA"/>
</dbReference>
<dbReference type="SMR" id="Q4PMW1"/>
<dbReference type="Proteomes" id="UP000001555">
    <property type="component" value="Unplaced"/>
</dbReference>
<dbReference type="GO" id="GO:0005576">
    <property type="term" value="C:extracellular region"/>
    <property type="evidence" value="ECO:0007669"/>
    <property type="project" value="UniProtKB-SubCell"/>
</dbReference>
<dbReference type="GO" id="GO:0090729">
    <property type="term" value="F:toxin activity"/>
    <property type="evidence" value="ECO:0007669"/>
    <property type="project" value="UniProtKB-KW"/>
</dbReference>
<comment type="function">
    <text evidence="2 4">Tick salivary platelet aggregation inhibitor that plays an important part in the anti-hemostatic strategy of ticks (Probable). Inhibits platelet aggregation induced by ADP, thrombin and thromboxane A2 (TXA2) (PubMed:25152502). Blocks platelet adhesion to soluble collagen (most probably through the binding to alpha-2/beta-1 integrin (ITGA2/ITGB1)) and binds to purified glycoprotein IIb/IIIa (ITGA2B/ITGB3) in a dose-dependent manner (PubMed:25152502). In vivo, reduces thrombus weight effectively in a rat arteriovenous shunt model and inhibits thrombosis in a carrageenan-induced mouse tail thrombosis model (PubMed:25152502).</text>
</comment>
<comment type="subcellular location">
    <subcellularLocation>
        <location evidence="4">Secreted</location>
    </subcellularLocation>
</comment>
<comment type="tissue specificity">
    <text evidence="5">Expressed in salivary glands.</text>
</comment>
<comment type="PTM">
    <text evidence="4">Contains 3 disulfide bonds.</text>
</comment>
<comment type="similarity">
    <text evidence="4">Belongs to the ixodegrin family.</text>
</comment>
<proteinExistence type="inferred from homology"/>
<organism>
    <name type="scientific">Ixodes scapularis</name>
    <name type="common">Black-legged tick</name>
    <name type="synonym">Deer tick</name>
    <dbReference type="NCBI Taxonomy" id="6945"/>
    <lineage>
        <taxon>Eukaryota</taxon>
        <taxon>Metazoa</taxon>
        <taxon>Ecdysozoa</taxon>
        <taxon>Arthropoda</taxon>
        <taxon>Chelicerata</taxon>
        <taxon>Arachnida</taxon>
        <taxon>Acari</taxon>
        <taxon>Parasitiformes</taxon>
        <taxon>Ixodida</taxon>
        <taxon>Ixodoidea</taxon>
        <taxon>Ixodidae</taxon>
        <taxon>Ixodinae</taxon>
        <taxon>Ixodes</taxon>
    </lineage>
</organism>
<accession>Q4PMW1</accession>
<feature type="signal peptide" evidence="1">
    <location>
        <begin position="1"/>
        <end position="21"/>
    </location>
</feature>
<feature type="chain" id="PRO_5004241823" description="Ixodegrin YY-39">
    <location>
        <begin position="22"/>
        <end position="60"/>
    </location>
</feature>
<feature type="short sequence motif" description="Cell attachment site" evidence="4">
    <location>
        <begin position="49"/>
        <end position="51"/>
    </location>
</feature>
<evidence type="ECO:0000255" key="1"/>
<evidence type="ECO:0000269" key="2">
    <source>
    </source>
</evidence>
<evidence type="ECO:0000303" key="3">
    <source>
    </source>
</evidence>
<evidence type="ECO:0000305" key="4"/>
<evidence type="ECO:0000305" key="5">
    <source>
    </source>
</evidence>
<evidence type="ECO:0000312" key="6">
    <source>
        <dbReference type="EMBL" id="AAY66649.1"/>
    </source>
</evidence>
<sequence>MNAALIAALLILGALTLDATAYSSTCERIPCTNNSDCHGPDLCQCRPPRGDDFGYFCSEY</sequence>
<reference evidence="6" key="1">
    <citation type="submission" date="2005-05" db="EMBL/GenBank/DDBJ databases">
        <authorList>
            <person name="Tseng H.-P."/>
            <person name="Hseu T.-H."/>
            <person name="Buhler D.R."/>
            <person name="Wang W.-D."/>
            <person name="Tsai H.-L."/>
            <person name="Hu C.-H."/>
        </authorList>
    </citation>
    <scope>NUCLEOTIDE SEQUENCE [MRNA]</scope>
    <source>
        <strain>Is-all-979</strain>
        <tissue>Salivary gland</tissue>
    </source>
</reference>
<reference evidence="6" key="2">
    <citation type="journal article" date="2006" name="Insect Biochem. Mol. Biol.">
        <title>An annotated catalog of salivary gland transcripts from Ixodes scapularis ticks.</title>
        <authorList>
            <person name="Ribeiro J.M.C."/>
            <person name="Alarcon-Chaidez F."/>
            <person name="Francischetti I.M.B."/>
            <person name="Mans B.J."/>
            <person name="Mather T.N."/>
            <person name="Valenzuela J.G."/>
            <person name="Wikel S.K."/>
        </authorList>
    </citation>
    <scope>NUCLEOTIDE SEQUENCE [MRNA]</scope>
    <source>
        <strain>Is-all-979</strain>
        <tissue>Salivary gland</tissue>
    </source>
</reference>
<reference key="3">
    <citation type="journal article" date="2015" name="Peptides">
        <title>YY-39, a tick anti-thrombosis peptide containing RGD domain.</title>
        <authorList>
            <person name="Tang J."/>
            <person name="Fang Y."/>
            <person name="Han Y."/>
            <person name="Bai X."/>
            <person name="Yan X."/>
            <person name="Zhang Y."/>
            <person name="Lai R."/>
            <person name="Zhang Z."/>
        </authorList>
    </citation>
    <scope>FUNCTION</scope>
    <scope>SYNTHESIS OF 22-60</scope>
</reference>
<protein>
    <recommendedName>
        <fullName evidence="3">Ixodegrin YY-39</fullName>
    </recommendedName>
    <alternativeName>
        <fullName evidence="4">Platelet aggregation inhibitor</fullName>
        <shortName evidence="4">PAI</shortName>
    </alternativeName>
    <alternativeName>
        <fullName evidence="3">Tick anti-thrombosis peptide</fullName>
    </alternativeName>
</protein>
<keyword id="KW-1015">Disulfide bond</keyword>
<keyword id="KW-1199">Hemostasis impairing toxin</keyword>
<keyword id="KW-1201">Platelet aggregation inhibiting toxin</keyword>
<keyword id="KW-1185">Reference proteome</keyword>
<keyword id="KW-0964">Secreted</keyword>
<keyword id="KW-0732">Signal</keyword>
<keyword id="KW-0800">Toxin</keyword>